<gene>
    <name evidence="1" type="primary">htpX</name>
    <name type="ordered locus">ML2278</name>
</gene>
<protein>
    <recommendedName>
        <fullName evidence="1">Protease HtpX homolog</fullName>
        <ecNumber evidence="1">3.4.24.-</ecNumber>
    </recommendedName>
</protein>
<dbReference type="EC" id="3.4.24.-" evidence="1"/>
<dbReference type="EMBL" id="AL583925">
    <property type="protein sequence ID" value="CAC31794.1"/>
    <property type="molecule type" value="Genomic_DNA"/>
</dbReference>
<dbReference type="PIR" id="B87194">
    <property type="entry name" value="B87194"/>
</dbReference>
<dbReference type="RefSeq" id="NP_302484.1">
    <property type="nucleotide sequence ID" value="NC_002677.1"/>
</dbReference>
<dbReference type="RefSeq" id="WP_010908804.1">
    <property type="nucleotide sequence ID" value="NC_002677.1"/>
</dbReference>
<dbReference type="STRING" id="272631.gene:17576137"/>
<dbReference type="KEGG" id="mle:ML2278"/>
<dbReference type="PATRIC" id="fig|272631.5.peg.4352"/>
<dbReference type="Leproma" id="ML2278"/>
<dbReference type="eggNOG" id="COG0501">
    <property type="taxonomic scope" value="Bacteria"/>
</dbReference>
<dbReference type="HOGENOM" id="CLU_042266_3_1_11"/>
<dbReference type="OrthoDB" id="15218at2"/>
<dbReference type="Proteomes" id="UP000000806">
    <property type="component" value="Chromosome"/>
</dbReference>
<dbReference type="GO" id="GO:0005886">
    <property type="term" value="C:plasma membrane"/>
    <property type="evidence" value="ECO:0007669"/>
    <property type="project" value="UniProtKB-SubCell"/>
</dbReference>
<dbReference type="GO" id="GO:0004222">
    <property type="term" value="F:metalloendopeptidase activity"/>
    <property type="evidence" value="ECO:0007669"/>
    <property type="project" value="UniProtKB-UniRule"/>
</dbReference>
<dbReference type="GO" id="GO:0008270">
    <property type="term" value="F:zinc ion binding"/>
    <property type="evidence" value="ECO:0007669"/>
    <property type="project" value="UniProtKB-UniRule"/>
</dbReference>
<dbReference type="GO" id="GO:0006508">
    <property type="term" value="P:proteolysis"/>
    <property type="evidence" value="ECO:0007669"/>
    <property type="project" value="UniProtKB-KW"/>
</dbReference>
<dbReference type="CDD" id="cd07336">
    <property type="entry name" value="M48B_HtpX_like"/>
    <property type="match status" value="1"/>
</dbReference>
<dbReference type="FunFam" id="3.30.2010.10:FF:000008">
    <property type="entry name" value="Protease HtpX homolog"/>
    <property type="match status" value="1"/>
</dbReference>
<dbReference type="Gene3D" id="3.30.2010.10">
    <property type="entry name" value="Metalloproteases ('zincins'), catalytic domain"/>
    <property type="match status" value="1"/>
</dbReference>
<dbReference type="HAMAP" id="MF_00188">
    <property type="entry name" value="Pept_M48_protease_HtpX"/>
    <property type="match status" value="1"/>
</dbReference>
<dbReference type="InterPro" id="IPR050083">
    <property type="entry name" value="HtpX_protease"/>
</dbReference>
<dbReference type="InterPro" id="IPR022919">
    <property type="entry name" value="Pept_M48_protease_HtpX"/>
</dbReference>
<dbReference type="InterPro" id="IPR001915">
    <property type="entry name" value="Peptidase_M48"/>
</dbReference>
<dbReference type="NCBIfam" id="NF002839">
    <property type="entry name" value="PRK03072.1"/>
    <property type="match status" value="1"/>
</dbReference>
<dbReference type="PANTHER" id="PTHR43221">
    <property type="entry name" value="PROTEASE HTPX"/>
    <property type="match status" value="1"/>
</dbReference>
<dbReference type="PANTHER" id="PTHR43221:SF1">
    <property type="entry name" value="PROTEASE HTPX"/>
    <property type="match status" value="1"/>
</dbReference>
<dbReference type="Pfam" id="PF01435">
    <property type="entry name" value="Peptidase_M48"/>
    <property type="match status" value="1"/>
</dbReference>
<dbReference type="PROSITE" id="PS00142">
    <property type="entry name" value="ZINC_PROTEASE"/>
    <property type="match status" value="1"/>
</dbReference>
<keyword id="KW-1003">Cell membrane</keyword>
<keyword id="KW-0378">Hydrolase</keyword>
<keyword id="KW-0472">Membrane</keyword>
<keyword id="KW-0479">Metal-binding</keyword>
<keyword id="KW-0482">Metalloprotease</keyword>
<keyword id="KW-0645">Protease</keyword>
<keyword id="KW-1185">Reference proteome</keyword>
<keyword id="KW-0812">Transmembrane</keyword>
<keyword id="KW-1133">Transmembrane helix</keyword>
<keyword id="KW-0862">Zinc</keyword>
<accession>Q9CBA4</accession>
<feature type="chain" id="PRO_0000138874" description="Protease HtpX homolog">
    <location>
        <begin position="1"/>
        <end position="287"/>
    </location>
</feature>
<feature type="transmembrane region" description="Helical" evidence="1">
    <location>
        <begin position="10"/>
        <end position="30"/>
    </location>
</feature>
<feature type="transmembrane region" description="Helical" evidence="1">
    <location>
        <begin position="33"/>
        <end position="53"/>
    </location>
</feature>
<feature type="transmembrane region" description="Helical" evidence="1">
    <location>
        <begin position="145"/>
        <end position="165"/>
    </location>
</feature>
<feature type="transmembrane region" description="Helical" evidence="1">
    <location>
        <begin position="181"/>
        <end position="201"/>
    </location>
</feature>
<feature type="active site" evidence="1">
    <location>
        <position position="136"/>
    </location>
</feature>
<feature type="binding site" evidence="1">
    <location>
        <position position="135"/>
    </location>
    <ligand>
        <name>Zn(2+)</name>
        <dbReference type="ChEBI" id="CHEBI:29105"/>
        <note>catalytic</note>
    </ligand>
</feature>
<feature type="binding site" evidence="1">
    <location>
        <position position="139"/>
    </location>
    <ligand>
        <name>Zn(2+)</name>
        <dbReference type="ChEBI" id="CHEBI:29105"/>
        <note>catalytic</note>
    </ligand>
</feature>
<feature type="binding site" evidence="1">
    <location>
        <position position="206"/>
    </location>
    <ligand>
        <name>Zn(2+)</name>
        <dbReference type="ChEBI" id="CHEBI:29105"/>
        <note>catalytic</note>
    </ligand>
</feature>
<proteinExistence type="inferred from homology"/>
<reference key="1">
    <citation type="journal article" date="2001" name="Nature">
        <title>Massive gene decay in the leprosy bacillus.</title>
        <authorList>
            <person name="Cole S.T."/>
            <person name="Eiglmeier K."/>
            <person name="Parkhill J."/>
            <person name="James K.D."/>
            <person name="Thomson N.R."/>
            <person name="Wheeler P.R."/>
            <person name="Honore N."/>
            <person name="Garnier T."/>
            <person name="Churcher C.M."/>
            <person name="Harris D.E."/>
            <person name="Mungall K.L."/>
            <person name="Basham D."/>
            <person name="Brown D."/>
            <person name="Chillingworth T."/>
            <person name="Connor R."/>
            <person name="Davies R.M."/>
            <person name="Devlin K."/>
            <person name="Duthoy S."/>
            <person name="Feltwell T."/>
            <person name="Fraser A."/>
            <person name="Hamlin N."/>
            <person name="Holroyd S."/>
            <person name="Hornsby T."/>
            <person name="Jagels K."/>
            <person name="Lacroix C."/>
            <person name="Maclean J."/>
            <person name="Moule S."/>
            <person name="Murphy L.D."/>
            <person name="Oliver K."/>
            <person name="Quail M.A."/>
            <person name="Rajandream M.A."/>
            <person name="Rutherford K.M."/>
            <person name="Rutter S."/>
            <person name="Seeger K."/>
            <person name="Simon S."/>
            <person name="Simmonds M."/>
            <person name="Skelton J."/>
            <person name="Squares R."/>
            <person name="Squares S."/>
            <person name="Stevens K."/>
            <person name="Taylor K."/>
            <person name="Whitehead S."/>
            <person name="Woodward J.R."/>
            <person name="Barrell B.G."/>
        </authorList>
    </citation>
    <scope>NUCLEOTIDE SEQUENCE [LARGE SCALE GENOMIC DNA]</scope>
    <source>
        <strain>TN</strain>
    </source>
</reference>
<sequence length="287" mass="30998">MTWHPQANRLKTFVLLVGMSTLIVVVGAIFGRTALFFATLVAVGINVYTYYNSDKLALRAMHAQPVSEVQAPVMYRIVRELATGAHQPMPRLYISDTNAPNAFATGRNPRNAAVCCTTGILEILNERELRAVLGHELSHVYNRDILISCVAGALAGVITALANMAMWAGTFGTTRDEENPFALLLVSLLGPIAATVVRLAVSRSREYQADESGAMLTGDPLALASALRKISSGVQAAPLPPEPQLASQAHLMIANPFRVGDRIGSLFSTHPPIEDRIRRLETMVAGR</sequence>
<comment type="cofactor">
    <cofactor evidence="1">
        <name>Zn(2+)</name>
        <dbReference type="ChEBI" id="CHEBI:29105"/>
    </cofactor>
    <text evidence="1">Binds 1 zinc ion per subunit.</text>
</comment>
<comment type="subcellular location">
    <subcellularLocation>
        <location evidence="1">Cell membrane</location>
        <topology evidence="1">Multi-pass membrane protein</topology>
    </subcellularLocation>
</comment>
<comment type="similarity">
    <text evidence="1">Belongs to the peptidase M48B family.</text>
</comment>
<name>HTPX_MYCLE</name>
<organism>
    <name type="scientific">Mycobacterium leprae (strain TN)</name>
    <dbReference type="NCBI Taxonomy" id="272631"/>
    <lineage>
        <taxon>Bacteria</taxon>
        <taxon>Bacillati</taxon>
        <taxon>Actinomycetota</taxon>
        <taxon>Actinomycetes</taxon>
        <taxon>Mycobacteriales</taxon>
        <taxon>Mycobacteriaceae</taxon>
        <taxon>Mycobacterium</taxon>
    </lineage>
</organism>
<evidence type="ECO:0000255" key="1">
    <source>
        <dbReference type="HAMAP-Rule" id="MF_00188"/>
    </source>
</evidence>